<organism>
    <name type="scientific">Erythroxylum coca</name>
    <name type="common">Coca plant</name>
    <dbReference type="NCBI Taxonomy" id="289672"/>
    <lineage>
        <taxon>Eukaryota</taxon>
        <taxon>Viridiplantae</taxon>
        <taxon>Streptophyta</taxon>
        <taxon>Embryophyta</taxon>
        <taxon>Tracheophyta</taxon>
        <taxon>Spermatophyta</taxon>
        <taxon>Magnoliopsida</taxon>
        <taxon>eudicotyledons</taxon>
        <taxon>Gunneridae</taxon>
        <taxon>Pentapetalae</taxon>
        <taxon>rosids</taxon>
        <taxon>fabids</taxon>
        <taxon>Malpighiales</taxon>
        <taxon>Erythroxylaceae</taxon>
        <taxon>Erythroxylum</taxon>
    </lineage>
</organism>
<dbReference type="EC" id="1.1.1.-"/>
<dbReference type="EMBL" id="JQ015104">
    <property type="protein sequence ID" value="AFD32321.1"/>
    <property type="molecule type" value="mRNA"/>
</dbReference>
<dbReference type="SMR" id="H9BFQ2"/>
<dbReference type="GO" id="GO:0016491">
    <property type="term" value="F:oxidoreductase activity"/>
    <property type="evidence" value="ECO:0007669"/>
    <property type="project" value="UniProtKB-KW"/>
</dbReference>
<dbReference type="FunFam" id="3.40.50.720:FF:000084">
    <property type="entry name" value="Short-chain dehydrogenase reductase"/>
    <property type="match status" value="1"/>
</dbReference>
<dbReference type="Gene3D" id="3.40.50.720">
    <property type="entry name" value="NAD(P)-binding Rossmann-like Domain"/>
    <property type="match status" value="1"/>
</dbReference>
<dbReference type="InterPro" id="IPR036291">
    <property type="entry name" value="NAD(P)-bd_dom_sf"/>
</dbReference>
<dbReference type="InterPro" id="IPR020904">
    <property type="entry name" value="Sc_DH/Rdtase_CS"/>
</dbReference>
<dbReference type="InterPro" id="IPR002347">
    <property type="entry name" value="SDR_fam"/>
</dbReference>
<dbReference type="NCBIfam" id="NF005559">
    <property type="entry name" value="PRK07231.1"/>
    <property type="match status" value="1"/>
</dbReference>
<dbReference type="PANTHER" id="PTHR43943">
    <property type="entry name" value="DEHYDROGENASE/REDUCTASE (SDR FAMILY) MEMBER 4"/>
    <property type="match status" value="1"/>
</dbReference>
<dbReference type="PANTHER" id="PTHR43943:SF2">
    <property type="entry name" value="DEHYDROGENASE_REDUCTASE 4"/>
    <property type="match status" value="1"/>
</dbReference>
<dbReference type="Pfam" id="PF13561">
    <property type="entry name" value="adh_short_C2"/>
    <property type="match status" value="1"/>
</dbReference>
<dbReference type="PRINTS" id="PR00081">
    <property type="entry name" value="GDHRDH"/>
</dbReference>
<dbReference type="PRINTS" id="PR00080">
    <property type="entry name" value="SDRFAMILY"/>
</dbReference>
<dbReference type="SUPFAM" id="SSF51735">
    <property type="entry name" value="NAD(P)-binding Rossmann-fold domains"/>
    <property type="match status" value="1"/>
</dbReference>
<dbReference type="PROSITE" id="PS00061">
    <property type="entry name" value="ADH_SHORT"/>
    <property type="match status" value="1"/>
</dbReference>
<keyword id="KW-0560">Oxidoreductase</keyword>
<comment type="function">
    <text evidence="3">Has no tropinone reductase activity.</text>
</comment>
<comment type="similarity">
    <text evidence="4">Belongs to the short-chain dehydrogenases/reductases (SDR) family.</text>
</comment>
<protein>
    <recommendedName>
        <fullName>Tropinone reductase-like 3</fullName>
        <ecNumber>1.1.1.-</ecNumber>
    </recommendedName>
</protein>
<proteinExistence type="evidence at transcript level"/>
<accession>H9BFQ2</accession>
<sequence length="258" mass="27640">MEKTSKKMIGRRFEGKVAIVTASTQGIGFAIAYRLGLEGAAVVISSRKQKNVDEAVEKLKAQGIEVLGVVCHVSNSKQRKNLIDTTVKKYGKIDVVVSNAAANPSTDALLETQESVLDKIWEINVKASILLLQEAAPHLQKGSSVVLISSITGYQPPASMAMYGVTKTALLGLTKALAEEMAPYVRVNCVAPGFVPTNFADYLTRNEDIRNSLEEKTFLKRLGTTQDMASATAFLASDDASYITGETVVVAGGTPSRL</sequence>
<reference key="1">
    <citation type="journal article" date="2012" name="Proc. Natl. Acad. Sci. U.S.A.">
        <title>Plant tropane alkaloid biosynthesis evolved independently in the Solanaceae and Erythroxylaceae.</title>
        <authorList>
            <person name="Jirschitzka J."/>
            <person name="Schmidt G.W."/>
            <person name="Reichelt M."/>
            <person name="Schneider B."/>
            <person name="Gershenzon J."/>
            <person name="D'Auria J.C."/>
        </authorList>
    </citation>
    <scope>NUCLEOTIDE SEQUENCE [MRNA]</scope>
    <scope>FUNCTION</scope>
</reference>
<feature type="chain" id="PRO_0000421863" description="Tropinone reductase-like 3">
    <location>
        <begin position="1"/>
        <end position="258"/>
    </location>
</feature>
<feature type="active site" description="Proton acceptor" evidence="2">
    <location>
        <position position="163"/>
    </location>
</feature>
<feature type="binding site" evidence="1">
    <location>
        <begin position="19"/>
        <end position="43"/>
    </location>
    <ligand>
        <name>NAD(+)</name>
        <dbReference type="ChEBI" id="CHEBI:57540"/>
    </ligand>
</feature>
<feature type="binding site" evidence="1">
    <location>
        <position position="150"/>
    </location>
    <ligand>
        <name>substrate</name>
    </ligand>
</feature>
<evidence type="ECO:0000250" key="1"/>
<evidence type="ECO:0000255" key="2">
    <source>
        <dbReference type="PROSITE-ProRule" id="PRU10001"/>
    </source>
</evidence>
<evidence type="ECO:0000269" key="3">
    <source>
    </source>
</evidence>
<evidence type="ECO:0000305" key="4"/>
<name>TPRL3_ERYCB</name>